<proteinExistence type="inferred from homology"/>
<organism>
    <name type="scientific">Klebsiella pneumoniae subsp. pneumoniae (strain ATCC 700721 / MGH 78578)</name>
    <dbReference type="NCBI Taxonomy" id="272620"/>
    <lineage>
        <taxon>Bacteria</taxon>
        <taxon>Pseudomonadati</taxon>
        <taxon>Pseudomonadota</taxon>
        <taxon>Gammaproteobacteria</taxon>
        <taxon>Enterobacterales</taxon>
        <taxon>Enterobacteriaceae</taxon>
        <taxon>Klebsiella/Raoultella group</taxon>
        <taxon>Klebsiella</taxon>
        <taxon>Klebsiella pneumoniae complex</taxon>
    </lineage>
</organism>
<feature type="chain" id="PRO_1000057081" description="UPF0060 membrane protein KPN78578_15550">
    <location>
        <begin position="1"/>
        <end position="108"/>
    </location>
</feature>
<feature type="transmembrane region" description="Helical" evidence="1">
    <location>
        <begin position="6"/>
        <end position="26"/>
    </location>
</feature>
<feature type="transmembrane region" description="Helical" evidence="1">
    <location>
        <begin position="29"/>
        <end position="49"/>
    </location>
</feature>
<feature type="transmembrane region" description="Helical" evidence="1">
    <location>
        <begin position="61"/>
        <end position="81"/>
    </location>
</feature>
<feature type="transmembrane region" description="Helical" evidence="1">
    <location>
        <begin position="86"/>
        <end position="106"/>
    </location>
</feature>
<reference key="1">
    <citation type="submission" date="2006-09" db="EMBL/GenBank/DDBJ databases">
        <authorList>
            <consortium name="The Klebsiella pneumonia Genome Sequencing Project"/>
            <person name="McClelland M."/>
            <person name="Sanderson E.K."/>
            <person name="Spieth J."/>
            <person name="Clifton W.S."/>
            <person name="Latreille P."/>
            <person name="Sabo A."/>
            <person name="Pepin K."/>
            <person name="Bhonagiri V."/>
            <person name="Porwollik S."/>
            <person name="Ali J."/>
            <person name="Wilson R.K."/>
        </authorList>
    </citation>
    <scope>NUCLEOTIDE SEQUENCE [LARGE SCALE GENOMIC DNA]</scope>
    <source>
        <strain>ATCC 700721 / MGH 78578</strain>
    </source>
</reference>
<name>Y1555_KLEP7</name>
<dbReference type="EMBL" id="CP000647">
    <property type="protein sequence ID" value="ABR77016.1"/>
    <property type="molecule type" value="Genomic_DNA"/>
</dbReference>
<dbReference type="SMR" id="A6T8U5"/>
<dbReference type="STRING" id="272620.KPN_01585"/>
<dbReference type="PaxDb" id="272620-KPN_01585"/>
<dbReference type="DNASU" id="5338197"/>
<dbReference type="EnsemblBacteria" id="ABR77016">
    <property type="protein sequence ID" value="ABR77016"/>
    <property type="gene ID" value="KPN_01585"/>
</dbReference>
<dbReference type="KEGG" id="kpn:KPN_01585"/>
<dbReference type="HOGENOM" id="CLU_117653_2_1_6"/>
<dbReference type="Proteomes" id="UP000000265">
    <property type="component" value="Chromosome"/>
</dbReference>
<dbReference type="GO" id="GO:0005886">
    <property type="term" value="C:plasma membrane"/>
    <property type="evidence" value="ECO:0007669"/>
    <property type="project" value="UniProtKB-SubCell"/>
</dbReference>
<dbReference type="HAMAP" id="MF_00010">
    <property type="entry name" value="UPF0060"/>
    <property type="match status" value="1"/>
</dbReference>
<dbReference type="InterPro" id="IPR003844">
    <property type="entry name" value="UPF0060"/>
</dbReference>
<dbReference type="NCBIfam" id="NF002586">
    <property type="entry name" value="PRK02237.1"/>
    <property type="match status" value="1"/>
</dbReference>
<dbReference type="PANTHER" id="PTHR36116">
    <property type="entry name" value="UPF0060 MEMBRANE PROTEIN YNFA"/>
    <property type="match status" value="1"/>
</dbReference>
<dbReference type="PANTHER" id="PTHR36116:SF1">
    <property type="entry name" value="UPF0060 MEMBRANE PROTEIN YNFA"/>
    <property type="match status" value="1"/>
</dbReference>
<dbReference type="Pfam" id="PF02694">
    <property type="entry name" value="UPF0060"/>
    <property type="match status" value="1"/>
</dbReference>
<dbReference type="SUPFAM" id="SSF103481">
    <property type="entry name" value="Multidrug resistance efflux transporter EmrE"/>
    <property type="match status" value="1"/>
</dbReference>
<comment type="subcellular location">
    <subcellularLocation>
        <location evidence="1">Cell inner membrane</location>
        <topology evidence="1">Multi-pass membrane protein</topology>
    </subcellularLocation>
</comment>
<comment type="similarity">
    <text evidence="1">Belongs to the UPF0060 family.</text>
</comment>
<protein>
    <recommendedName>
        <fullName evidence="1">UPF0060 membrane protein KPN78578_15550</fullName>
    </recommendedName>
</protein>
<gene>
    <name type="ordered locus">KPN78578_15550</name>
    <name type="ORF">KPN_01585</name>
</gene>
<keyword id="KW-0997">Cell inner membrane</keyword>
<keyword id="KW-1003">Cell membrane</keyword>
<keyword id="KW-0472">Membrane</keyword>
<keyword id="KW-0812">Transmembrane</keyword>
<keyword id="KW-1133">Transmembrane helix</keyword>
<sequence>MLKTTLLFFATALCEIVGCYLPWLWLKRGATPLLLIPTALALALFVWLLTLHPAASGRVYAAYGGVYVCTALLWLRVVDGVKLTHYDWAGAAIALCGMLIIVAGWGRA</sequence>
<accession>A6T8U5</accession>
<evidence type="ECO:0000255" key="1">
    <source>
        <dbReference type="HAMAP-Rule" id="MF_00010"/>
    </source>
</evidence>